<accession>Q588Z1</accession>
<comment type="function">
    <text evidence="3">Catalyzes the oxidation of polyvinyl alcohol (PVA) in the polyvinyl alcohol degradation pathway.</text>
</comment>
<comment type="catalytic activity">
    <reaction evidence="3">
        <text>a polyvinyl alcohol + 2n Fe(III)-[cytochrome c] = an oxidized polyvinyl alcohol + 2n Fe(II)-[cytochrome c] + 2n H(+)</text>
        <dbReference type="Rhea" id="RHEA:20157"/>
        <dbReference type="Rhea" id="RHEA-COMP:10350"/>
        <dbReference type="Rhea" id="RHEA-COMP:12870"/>
        <dbReference type="Rhea" id="RHEA-COMP:12871"/>
        <dbReference type="Rhea" id="RHEA-COMP:14399"/>
        <dbReference type="ChEBI" id="CHEBI:15378"/>
        <dbReference type="ChEBI" id="CHEBI:16571"/>
        <dbReference type="ChEBI" id="CHEBI:17246"/>
        <dbReference type="ChEBI" id="CHEBI:29033"/>
        <dbReference type="ChEBI" id="CHEBI:29034"/>
        <dbReference type="EC" id="1.1.2.6"/>
    </reaction>
</comment>
<comment type="cofactor">
    <cofactor evidence="3">
        <name>pyrroloquinoline quinone</name>
        <dbReference type="ChEBI" id="CHEBI:58442"/>
    </cofactor>
</comment>
<comment type="biophysicochemical properties">
    <phDependence>
        <text evidence="3">Optimum pH is 7.2-7.4.</text>
    </phDependence>
    <temperatureDependence>
        <text evidence="3">Optimum temperature is 37 degrees Celsius.</text>
    </temperatureDependence>
</comment>
<comment type="subunit">
    <text evidence="3">Monomer.</text>
</comment>
<comment type="subcellular location">
    <subcellularLocation>
        <location evidence="2">Periplasm</location>
    </subcellularLocation>
</comment>
<comment type="similarity">
    <text evidence="4">Belongs to the bacterial PQQ dehydrogenase family.</text>
</comment>
<feature type="signal peptide" evidence="3">
    <location>
        <begin position="1"/>
        <end position="32"/>
    </location>
</feature>
<feature type="chain" id="PRO_0000419459" description="Polyvinylalcohol dehydrogenase">
    <location>
        <begin position="33"/>
        <end position="654"/>
    </location>
</feature>
<feature type="domain" description="Cytochrome c" evidence="1">
    <location>
        <begin position="42"/>
        <end position="159"/>
    </location>
</feature>
<feature type="binding site" description="covalent" evidence="1">
    <location>
        <position position="55"/>
    </location>
    <ligand>
        <name>heme c</name>
        <dbReference type="ChEBI" id="CHEBI:61717"/>
    </ligand>
</feature>
<feature type="binding site" description="covalent" evidence="1">
    <location>
        <position position="58"/>
    </location>
    <ligand>
        <name>heme c</name>
        <dbReference type="ChEBI" id="CHEBI:61717"/>
    </ligand>
</feature>
<feature type="binding site" description="axial binding residue" evidence="1">
    <location>
        <position position="59"/>
    </location>
    <ligand>
        <name>heme c</name>
        <dbReference type="ChEBI" id="CHEBI:61717"/>
    </ligand>
    <ligandPart>
        <name>Fe</name>
        <dbReference type="ChEBI" id="CHEBI:18248"/>
    </ligandPart>
</feature>
<reference key="1">
    <citation type="journal article" date="2005" name="Microbiology">
        <title>Biochemical and molecular characterization of a periplasmic hydrolase for oxidized polyvinyl alcohol from Sphingomonas sp. strain 113P3.</title>
        <authorList>
            <person name="Klomklang W."/>
            <person name="Tani A."/>
            <person name="Kimbara K."/>
            <person name="Mamoto R."/>
            <person name="Ueda T."/>
            <person name="Shimao M."/>
            <person name="Kawai F."/>
        </authorList>
    </citation>
    <scope>NUCLEOTIDE SEQUENCE [GENOMIC DNA]</scope>
    <scope>SUBCELLULAR LOCATION</scope>
    <source>
        <strain>113P3</strain>
    </source>
</reference>
<reference key="2">
    <citation type="journal article" date="2006" name="Microbiology">
        <title>Cloning and expression of the gene for periplasmic poly(vinyl alcohol) dehydrogenase from Sphingomonas sp. strain 113P3, a novel-type quinohaemoprotein alcohol dehydrogenase.</title>
        <authorList>
            <person name="Hirota-Mamoto R."/>
            <person name="Nagai R."/>
            <person name="Tachibana S."/>
            <person name="Yasuda M."/>
            <person name="Tani A."/>
            <person name="Kimbara K."/>
            <person name="Kawai F."/>
        </authorList>
    </citation>
    <scope>PROTEIN SEQUENCE OF 33-46</scope>
    <scope>FUNCTION</scope>
    <scope>CATALYTIC ACTIVITY</scope>
    <scope>COFACTOR</scope>
    <scope>BIOPHYSICOCHEMICAL PROPERTIES</scope>
    <scope>SUBUNIT</scope>
    <source>
        <strain>113P3</strain>
    </source>
</reference>
<proteinExistence type="evidence at protein level"/>
<name>PVADH_SPHS1</name>
<organism>
    <name type="scientific">Sphingopyxis sp. (strain 113P3)</name>
    <dbReference type="NCBI Taxonomy" id="292913"/>
    <lineage>
        <taxon>Bacteria</taxon>
        <taxon>Pseudomonadati</taxon>
        <taxon>Pseudomonadota</taxon>
        <taxon>Alphaproteobacteria</taxon>
        <taxon>Sphingomonadales</taxon>
        <taxon>Sphingomonadaceae</taxon>
        <taxon>Sphingopyxis</taxon>
    </lineage>
</organism>
<evidence type="ECO:0000255" key="1">
    <source>
        <dbReference type="PROSITE-ProRule" id="PRU00433"/>
    </source>
</evidence>
<evidence type="ECO:0000269" key="2">
    <source>
    </source>
</evidence>
<evidence type="ECO:0000269" key="3">
    <source>
    </source>
</evidence>
<evidence type="ECO:0000305" key="4"/>
<dbReference type="EC" id="1.1.2.6"/>
<dbReference type="EMBL" id="AB190288">
    <property type="protein sequence ID" value="BAD95543.3"/>
    <property type="molecule type" value="Genomic_DNA"/>
</dbReference>
<dbReference type="SMR" id="Q588Z1"/>
<dbReference type="STRING" id="292913.LH20_00830"/>
<dbReference type="KEGG" id="ag:BAD95543"/>
<dbReference type="BRENDA" id="1.1.2.6">
    <property type="organism ID" value="8996"/>
</dbReference>
<dbReference type="BRENDA" id="1.1.3.30">
    <property type="organism ID" value="8996"/>
</dbReference>
<dbReference type="GO" id="GO:0042597">
    <property type="term" value="C:periplasmic space"/>
    <property type="evidence" value="ECO:0007669"/>
    <property type="project" value="UniProtKB-SubCell"/>
</dbReference>
<dbReference type="GO" id="GO:0009055">
    <property type="term" value="F:electron transfer activity"/>
    <property type="evidence" value="ECO:0007669"/>
    <property type="project" value="InterPro"/>
</dbReference>
<dbReference type="GO" id="GO:0020037">
    <property type="term" value="F:heme binding"/>
    <property type="evidence" value="ECO:0007669"/>
    <property type="project" value="InterPro"/>
</dbReference>
<dbReference type="GO" id="GO:0046872">
    <property type="term" value="F:metal ion binding"/>
    <property type="evidence" value="ECO:0007669"/>
    <property type="project" value="UniProtKB-KW"/>
</dbReference>
<dbReference type="GO" id="GO:0047059">
    <property type="term" value="F:polyvinyl alcohol dehydrogenase (cytochrome) activity"/>
    <property type="evidence" value="ECO:0007669"/>
    <property type="project" value="UniProtKB-EC"/>
</dbReference>
<dbReference type="Gene3D" id="2.140.10.10">
    <property type="entry name" value="Quinoprotein alcohol dehydrogenase-like superfamily"/>
    <property type="match status" value="1"/>
</dbReference>
<dbReference type="Gene3D" id="2.130.10.10">
    <property type="entry name" value="YVTN repeat-like/Quinoprotein amine dehydrogenase"/>
    <property type="match status" value="1"/>
</dbReference>
<dbReference type="InterPro" id="IPR009056">
    <property type="entry name" value="Cyt_c-like_dom"/>
</dbReference>
<dbReference type="InterPro" id="IPR036909">
    <property type="entry name" value="Cyt_c-like_dom_sf"/>
</dbReference>
<dbReference type="InterPro" id="IPR018391">
    <property type="entry name" value="PQQ_b-propeller_rpt"/>
</dbReference>
<dbReference type="InterPro" id="IPR002372">
    <property type="entry name" value="PQQ_rpt_dom"/>
</dbReference>
<dbReference type="InterPro" id="IPR011047">
    <property type="entry name" value="Quinoprotein_ADH-like_sf"/>
</dbReference>
<dbReference type="InterPro" id="IPR015943">
    <property type="entry name" value="WD40/YVTN_repeat-like_dom_sf"/>
</dbReference>
<dbReference type="PANTHER" id="PTHR32303:SF10">
    <property type="entry name" value="OUTER MEMBRANE PROTEIN ASSEMBLY FACTOR BAMB"/>
    <property type="match status" value="1"/>
</dbReference>
<dbReference type="PANTHER" id="PTHR32303">
    <property type="entry name" value="QUINOPROTEIN ALCOHOL DEHYDROGENASE (CYTOCHROME C)"/>
    <property type="match status" value="1"/>
</dbReference>
<dbReference type="Pfam" id="PF01011">
    <property type="entry name" value="PQQ"/>
    <property type="match status" value="1"/>
</dbReference>
<dbReference type="Pfam" id="PF13360">
    <property type="entry name" value="PQQ_2"/>
    <property type="match status" value="1"/>
</dbReference>
<dbReference type="SMART" id="SM00564">
    <property type="entry name" value="PQQ"/>
    <property type="match status" value="7"/>
</dbReference>
<dbReference type="SUPFAM" id="SSF46626">
    <property type="entry name" value="Cytochrome c"/>
    <property type="match status" value="1"/>
</dbReference>
<dbReference type="SUPFAM" id="SSF50998">
    <property type="entry name" value="Quinoprotein alcohol dehydrogenase-like"/>
    <property type="match status" value="1"/>
</dbReference>
<dbReference type="PROSITE" id="PS51007">
    <property type="entry name" value="CYTC"/>
    <property type="match status" value="1"/>
</dbReference>
<gene>
    <name type="primary">pvadh</name>
</gene>
<protein>
    <recommendedName>
        <fullName>Polyvinylalcohol dehydrogenase</fullName>
        <shortName>PVA dehydrogenase</shortName>
        <shortName>PVADH</shortName>
        <ecNumber>1.1.2.6</ecNumber>
    </recommendedName>
    <alternativeName>
        <fullName>Polyvinyl alcohol dehydrogenase (cytochrome)</fullName>
    </alternativeName>
</protein>
<sequence>MGSHAWGGAVFSAATLIAFGSVVHASGTVAETAPQSGHAVPADQLDGETLYKARCAACHDNAEGRTPSREVLSKNPASFILASMRTGAMVPMAEGLTLEEMTAIARAVGKADAKTDDGIDLRRIWGNSVEGTPLDAPQCSSAPTPVDLGAANQWNGWSTEKDNGRFQRKPALDVADIPKLKLKWAFQYPGSKNGQATVIGDRLFTTSTSGAVYALNAKTGCVYWRHAAEGATRTSPVIAALPEGAPAKTALFFSDFTKAAVALDAETGKQLWKTVVDDQPALQMTGSITYWDGKIYVPISSGTEAFAQIPTWECCKFRGALVALDAATGKILWKRYTTEQEPRPFKLNKAGRQMWGPSGGAIWVTPTVDEARRLIYVGTSNSYTDVPYDNSDSVMAIDADTGAVRWTVQLLADDNYIDGCWQKGKEHANCPNPLGPDFSIGAAPIYRKMADGKEFLLVGQKSGMIYALDPANKGAKIWERQLSLGSALGGIEFGTAADDGKVYAGVSDIASQAKDRGKPGLWALDIRTGEVAWNFLNAPDTKCRWNNWWCHGAFSQAISVIPGAIFAGSYDGHFRAFDTATGKIIWDVDTGTKAVTTLSGAKAFGGVMDGAGPTIAGGMVYVHSGYAGRSSESGGRDLRGTDGNILMAFSVDGK</sequence>
<keyword id="KW-0903">Direct protein sequencing</keyword>
<keyword id="KW-0349">Heme</keyword>
<keyword id="KW-0408">Iron</keyword>
<keyword id="KW-0479">Metal-binding</keyword>
<keyword id="KW-0560">Oxidoreductase</keyword>
<keyword id="KW-0574">Periplasm</keyword>
<keyword id="KW-0732">Signal</keyword>